<accession>P08220</accession>
<proteinExistence type="evidence at transcript level"/>
<protein>
    <recommendedName>
        <fullName>Gamma-aminobutyric acid receptor subunit beta-1</fullName>
    </recommendedName>
    <alternativeName>
        <fullName evidence="2">GABA(A) receptor subunit beta-1</fullName>
        <shortName evidence="1">GABAAR subunit beta-1</shortName>
    </alternativeName>
</protein>
<sequence length="474" mass="54130">MWTVQNRESLGLLSFPVMIAMVCCAHSANEPSNMSYVKETVDRLLKGYDIRLRPDFGGPPVDVGMRIDVASIDMVSEVNMDYTLTMYFQQSWKDKRLSYSGIPLNLTLDNRVADQLWVPDTYFLNDKKSFVHGVTVKNRMIRLHPDGTVLYGLRITTTAACMMDLRRYPLDEQNCTLEIESYGYTTDDIEFYWNGGEGAVTGVNKIELPQFSIVDYKMVSKKVEFTTGAYPRLSLSFRLKRNIGYFILQTYMPSTLITILSWVSFWINYDASAARVALGITTVLTMTTISTHLRETLPKIPYVKAIDIYLMGCFVFVFLALLEYAFVNYIFFGKGPQKKGAGKQDQSANEKNKLEMNKVQVDAHGNILLSTLEIRNETSGSEVLTGVGDPKTTMYSYDSASIQYRKPMSSREGYGRALDRHGAHSKGRIRRRASQLKVKIPDLTDVNSIDKWSRMFFPITFSLFNVVYWLYYVH</sequence>
<feature type="signal peptide" evidence="6">
    <location>
        <begin position="1"/>
        <end position="25"/>
    </location>
</feature>
<feature type="chain" id="PRO_0000000455" description="Gamma-aminobutyric acid receptor subunit beta-1">
    <location>
        <begin position="26"/>
        <end position="474"/>
    </location>
</feature>
<feature type="topological domain" description="Extracellular" evidence="8">
    <location>
        <begin position="26"/>
        <end position="245"/>
    </location>
</feature>
<feature type="transmembrane region" description="Helical" evidence="8">
    <location>
        <begin position="246"/>
        <end position="267"/>
    </location>
</feature>
<feature type="transmembrane region" description="Helical" evidence="8">
    <location>
        <begin position="271"/>
        <end position="293"/>
    </location>
</feature>
<feature type="transmembrane region" description="Helical" evidence="8">
    <location>
        <begin position="305"/>
        <end position="327"/>
    </location>
</feature>
<feature type="topological domain" description="Cytoplasmic" evidence="8">
    <location>
        <begin position="328"/>
        <end position="451"/>
    </location>
</feature>
<feature type="transmembrane region" description="Helical" evidence="8">
    <location>
        <begin position="452"/>
        <end position="473"/>
    </location>
</feature>
<feature type="binding site" description="in chain B" evidence="3">
    <location>
        <position position="122"/>
    </location>
    <ligand>
        <name>histamine</name>
        <dbReference type="ChEBI" id="CHEBI:58432"/>
        <note>ligand shared between two neighboring beta subunits</note>
    </ligand>
</feature>
<feature type="binding site" description="in chain B" evidence="3">
    <location>
        <begin position="181"/>
        <end position="182"/>
    </location>
    <ligand>
        <name>histamine</name>
        <dbReference type="ChEBI" id="CHEBI:58432"/>
        <note>ligand shared between two neighboring beta subunits</note>
    </ligand>
</feature>
<feature type="binding site" description="in chain A" evidence="2">
    <location>
        <position position="182"/>
    </location>
    <ligand>
        <name>4-aminobutanoate</name>
        <dbReference type="ChEBI" id="CHEBI:59888"/>
        <note>ligand shared with the neighboring alpha subunit</note>
    </ligand>
</feature>
<feature type="binding site" description="in chain A" evidence="2">
    <location>
        <position position="227"/>
    </location>
    <ligand>
        <name>4-aminobutanoate</name>
        <dbReference type="ChEBI" id="CHEBI:59888"/>
        <note>ligand shared with the neighboring alpha subunit</note>
    </ligand>
</feature>
<feature type="binding site" description="in chain B" evidence="3">
    <location>
        <position position="227"/>
    </location>
    <ligand>
        <name>histamine</name>
        <dbReference type="ChEBI" id="CHEBI:58432"/>
        <note>ligand shared between two neighboring beta subunits</note>
    </ligand>
</feature>
<feature type="glycosylation site" description="N-linked (GlcNAc...) asparagine" evidence="6">
    <location>
        <position position="33"/>
    </location>
</feature>
<feature type="glycosylation site" description="N-linked (GlcNAc...) asparagine" evidence="6">
    <location>
        <position position="105"/>
    </location>
</feature>
<feature type="glycosylation site" description="N-linked (GlcNAc...) asparagine" evidence="6">
    <location>
        <position position="174"/>
    </location>
</feature>
<feature type="disulfide bond" evidence="2">
    <location>
        <begin position="161"/>
        <end position="175"/>
    </location>
</feature>
<name>GBRB1_BOVIN</name>
<reference key="1">
    <citation type="journal article" date="1987" name="Nature">
        <title>Sequence and functional expression of the GABA A receptor shows a ligand-gated receptor super-family.</title>
        <authorList>
            <person name="Schofield P.R."/>
            <person name="Darlison M.G."/>
            <person name="Fujita N."/>
            <person name="Burt D.R."/>
            <person name="Stephenson F.A."/>
            <person name="Rodriguez H."/>
            <person name="Rhee L.M."/>
            <person name="Ramachandran J."/>
            <person name="Reale V."/>
            <person name="Glencorse T.A."/>
            <person name="Seeburg P.H."/>
            <person name="Barnard E.A."/>
        </authorList>
    </citation>
    <scope>NUCLEOTIDE SEQUENCE [MRNA]</scope>
    <scope>FUNCTION</scope>
    <scope>SUBCELLULAR LOCATION</scope>
    <scope>TRANSPORTER ACTIVITY</scope>
    <source>
        <tissue>Brain</tissue>
    </source>
</reference>
<dbReference type="EMBL" id="X05718">
    <property type="protein sequence ID" value="CAA29190.1"/>
    <property type="molecule type" value="mRNA"/>
</dbReference>
<dbReference type="PIR" id="B27142">
    <property type="entry name" value="B27142"/>
</dbReference>
<dbReference type="RefSeq" id="NP_776969.1">
    <property type="nucleotide sequence ID" value="NM_174544.3"/>
</dbReference>
<dbReference type="SMR" id="P08220"/>
<dbReference type="FunCoup" id="P08220">
    <property type="interactions" value="1099"/>
</dbReference>
<dbReference type="STRING" id="9913.ENSBTAP00000023711"/>
<dbReference type="BindingDB" id="P08220"/>
<dbReference type="ChEMBL" id="CHEMBL4680049"/>
<dbReference type="DrugCentral" id="P08220"/>
<dbReference type="GlyCosmos" id="P08220">
    <property type="glycosylation" value="3 sites, No reported glycans"/>
</dbReference>
<dbReference type="GlyGen" id="P08220">
    <property type="glycosylation" value="3 sites"/>
</dbReference>
<dbReference type="PaxDb" id="9913-ENSBTAP00000023711"/>
<dbReference type="Ensembl" id="ENSBTAT00000023711.7">
    <property type="protein sequence ID" value="ENSBTAP00000023711.5"/>
    <property type="gene ID" value="ENSBTAG00000017837.7"/>
</dbReference>
<dbReference type="GeneID" id="282239"/>
<dbReference type="KEGG" id="bta:282239"/>
<dbReference type="CTD" id="2560"/>
<dbReference type="VEuPathDB" id="HostDB:ENSBTAG00000017837"/>
<dbReference type="VGNC" id="VGNC:29196">
    <property type="gene designation" value="GABRB1"/>
</dbReference>
<dbReference type="eggNOG" id="KOG3643">
    <property type="taxonomic scope" value="Eukaryota"/>
</dbReference>
<dbReference type="GeneTree" id="ENSGT00940000154245"/>
<dbReference type="HOGENOM" id="CLU_010920_1_4_1"/>
<dbReference type="InParanoid" id="P08220"/>
<dbReference type="OMA" id="DRPIGHK"/>
<dbReference type="OrthoDB" id="8890589at2759"/>
<dbReference type="TreeFam" id="TF315453"/>
<dbReference type="Reactome" id="R-BTA-977443">
    <property type="pathway name" value="GABA receptor activation"/>
</dbReference>
<dbReference type="PRO" id="PR:P08220"/>
<dbReference type="Proteomes" id="UP000009136">
    <property type="component" value="Chromosome 6"/>
</dbReference>
<dbReference type="Bgee" id="ENSBTAG00000017837">
    <property type="expression patterns" value="Expressed in occipital lobe and 37 other cell types or tissues"/>
</dbReference>
<dbReference type="GO" id="GO:0034707">
    <property type="term" value="C:chloride channel complex"/>
    <property type="evidence" value="ECO:0007669"/>
    <property type="project" value="UniProtKB-KW"/>
</dbReference>
<dbReference type="GO" id="GO:1902711">
    <property type="term" value="C:GABA-A receptor complex"/>
    <property type="evidence" value="ECO:0000250"/>
    <property type="project" value="UniProtKB"/>
</dbReference>
<dbReference type="GO" id="GO:0098982">
    <property type="term" value="C:GABA-ergic synapse"/>
    <property type="evidence" value="ECO:0007669"/>
    <property type="project" value="Ensembl"/>
</dbReference>
<dbReference type="GO" id="GO:0005886">
    <property type="term" value="C:plasma membrane"/>
    <property type="evidence" value="ECO:0000250"/>
    <property type="project" value="UniProtKB"/>
</dbReference>
<dbReference type="GO" id="GO:0045211">
    <property type="term" value="C:postsynaptic membrane"/>
    <property type="evidence" value="ECO:0007669"/>
    <property type="project" value="UniProtKB-SubCell"/>
</dbReference>
<dbReference type="GO" id="GO:0098685">
    <property type="term" value="C:Schaffer collateral - CA1 synapse"/>
    <property type="evidence" value="ECO:0007669"/>
    <property type="project" value="Ensembl"/>
</dbReference>
<dbReference type="GO" id="GO:0150047">
    <property type="term" value="F:G protein-coupled neurotransmitter receptor activity involved in regulation of presynaptic membrane potential"/>
    <property type="evidence" value="ECO:0007669"/>
    <property type="project" value="Ensembl"/>
</dbReference>
<dbReference type="GO" id="GO:0004890">
    <property type="term" value="F:GABA-A receptor activity"/>
    <property type="evidence" value="ECO:0000250"/>
    <property type="project" value="UniProtKB"/>
</dbReference>
<dbReference type="GO" id="GO:0022851">
    <property type="term" value="F:GABA-gated chloride ion channel activity"/>
    <property type="evidence" value="ECO:0000250"/>
    <property type="project" value="UniProtKB"/>
</dbReference>
<dbReference type="GO" id="GO:0015276">
    <property type="term" value="F:ligand-gated monoatomic ion channel activity"/>
    <property type="evidence" value="ECO:0000250"/>
    <property type="project" value="UniProtKB"/>
</dbReference>
<dbReference type="GO" id="GO:0099507">
    <property type="term" value="F:ligand-gated monoatomic ion channel activity involved in regulation of presynaptic membrane potential"/>
    <property type="evidence" value="ECO:0007669"/>
    <property type="project" value="Ensembl"/>
</dbReference>
<dbReference type="GO" id="GO:0071420">
    <property type="term" value="P:cellular response to histamine"/>
    <property type="evidence" value="ECO:0000250"/>
    <property type="project" value="UniProtKB"/>
</dbReference>
<dbReference type="GO" id="GO:1902476">
    <property type="term" value="P:chloride transmembrane transport"/>
    <property type="evidence" value="ECO:0000318"/>
    <property type="project" value="GO_Central"/>
</dbReference>
<dbReference type="GO" id="GO:0007214">
    <property type="term" value="P:gamma-aminobutyric acid signaling pathway"/>
    <property type="evidence" value="ECO:0000250"/>
    <property type="project" value="UniProtKB"/>
</dbReference>
<dbReference type="GO" id="GO:0006811">
    <property type="term" value="P:monoatomic ion transport"/>
    <property type="evidence" value="ECO:0000250"/>
    <property type="project" value="UniProtKB"/>
</dbReference>
<dbReference type="CDD" id="cd18999">
    <property type="entry name" value="LGIC_ECD_GABAAR_B"/>
    <property type="match status" value="1"/>
</dbReference>
<dbReference type="CDD" id="cd19053">
    <property type="entry name" value="LGIC_TM_GABAAR_beta"/>
    <property type="match status" value="1"/>
</dbReference>
<dbReference type="FunFam" id="2.70.170.10:FF:000004">
    <property type="entry name" value="Gamma-aminobutyric acid receptor subunit beta-2 isoform A"/>
    <property type="match status" value="1"/>
</dbReference>
<dbReference type="FunFam" id="1.20.58.390:FF:000005">
    <property type="entry name" value="Putative gamma-aminobutyric acid receptor subunit rho-2-like"/>
    <property type="match status" value="1"/>
</dbReference>
<dbReference type="Gene3D" id="2.70.170.10">
    <property type="entry name" value="Neurotransmitter-gated ion-channel ligand-binding domain"/>
    <property type="match status" value="1"/>
</dbReference>
<dbReference type="Gene3D" id="1.20.58.390">
    <property type="entry name" value="Neurotransmitter-gated ion-channel transmembrane domain"/>
    <property type="match status" value="1"/>
</dbReference>
<dbReference type="InterPro" id="IPR006028">
    <property type="entry name" value="GABAA/Glycine_rcpt"/>
</dbReference>
<dbReference type="InterPro" id="IPR002289">
    <property type="entry name" value="GABAAb_rcpt"/>
</dbReference>
<dbReference type="InterPro" id="IPR006202">
    <property type="entry name" value="Neur_chan_lig-bd"/>
</dbReference>
<dbReference type="InterPro" id="IPR036734">
    <property type="entry name" value="Neur_chan_lig-bd_sf"/>
</dbReference>
<dbReference type="InterPro" id="IPR006201">
    <property type="entry name" value="Neur_channel"/>
</dbReference>
<dbReference type="InterPro" id="IPR036719">
    <property type="entry name" value="Neuro-gated_channel_TM_sf"/>
</dbReference>
<dbReference type="InterPro" id="IPR038050">
    <property type="entry name" value="Neuro_actylchol_rec"/>
</dbReference>
<dbReference type="InterPro" id="IPR006029">
    <property type="entry name" value="Neurotrans-gated_channel_TM"/>
</dbReference>
<dbReference type="InterPro" id="IPR018000">
    <property type="entry name" value="Neurotransmitter_ion_chnl_CS"/>
</dbReference>
<dbReference type="NCBIfam" id="TIGR00860">
    <property type="entry name" value="LIC"/>
    <property type="match status" value="1"/>
</dbReference>
<dbReference type="PANTHER" id="PTHR18945">
    <property type="entry name" value="NEUROTRANSMITTER GATED ION CHANNEL"/>
    <property type="match status" value="1"/>
</dbReference>
<dbReference type="Pfam" id="PF02931">
    <property type="entry name" value="Neur_chan_LBD"/>
    <property type="match status" value="1"/>
</dbReference>
<dbReference type="Pfam" id="PF02932">
    <property type="entry name" value="Neur_chan_memb"/>
    <property type="match status" value="1"/>
</dbReference>
<dbReference type="PRINTS" id="PR01160">
    <property type="entry name" value="GABAARBETA"/>
</dbReference>
<dbReference type="PRINTS" id="PR00253">
    <property type="entry name" value="GABAARECEPTR"/>
</dbReference>
<dbReference type="PRINTS" id="PR00252">
    <property type="entry name" value="NRIONCHANNEL"/>
</dbReference>
<dbReference type="SUPFAM" id="SSF90112">
    <property type="entry name" value="Neurotransmitter-gated ion-channel transmembrane pore"/>
    <property type="match status" value="1"/>
</dbReference>
<dbReference type="SUPFAM" id="SSF63712">
    <property type="entry name" value="Nicotinic receptor ligand binding domain-like"/>
    <property type="match status" value="1"/>
</dbReference>
<dbReference type="PROSITE" id="PS00236">
    <property type="entry name" value="NEUROTR_ION_CHANNEL"/>
    <property type="match status" value="1"/>
</dbReference>
<organism>
    <name type="scientific">Bos taurus</name>
    <name type="common">Bovine</name>
    <dbReference type="NCBI Taxonomy" id="9913"/>
    <lineage>
        <taxon>Eukaryota</taxon>
        <taxon>Metazoa</taxon>
        <taxon>Chordata</taxon>
        <taxon>Craniata</taxon>
        <taxon>Vertebrata</taxon>
        <taxon>Euteleostomi</taxon>
        <taxon>Mammalia</taxon>
        <taxon>Eutheria</taxon>
        <taxon>Laurasiatheria</taxon>
        <taxon>Artiodactyla</taxon>
        <taxon>Ruminantia</taxon>
        <taxon>Pecora</taxon>
        <taxon>Bovidae</taxon>
        <taxon>Bovinae</taxon>
        <taxon>Bos</taxon>
    </lineage>
</organism>
<evidence type="ECO:0000250" key="1">
    <source>
        <dbReference type="UniProtKB" id="P14867"/>
    </source>
</evidence>
<evidence type="ECO:0000250" key="2">
    <source>
        <dbReference type="UniProtKB" id="P15431"/>
    </source>
</evidence>
<evidence type="ECO:0000250" key="3">
    <source>
        <dbReference type="UniProtKB" id="P28472"/>
    </source>
</evidence>
<evidence type="ECO:0000250" key="4">
    <source>
        <dbReference type="UniProtKB" id="P50571"/>
    </source>
</evidence>
<evidence type="ECO:0000250" key="5">
    <source>
        <dbReference type="UniProtKB" id="P63138"/>
    </source>
</evidence>
<evidence type="ECO:0000255" key="6"/>
<evidence type="ECO:0000269" key="7">
    <source>
    </source>
</evidence>
<evidence type="ECO:0000305" key="8"/>
<keyword id="KW-1003">Cell membrane</keyword>
<keyword id="KW-0868">Chloride</keyword>
<keyword id="KW-0869">Chloride channel</keyword>
<keyword id="KW-1015">Disulfide bond</keyword>
<keyword id="KW-0325">Glycoprotein</keyword>
<keyword id="KW-0407">Ion channel</keyword>
<keyword id="KW-0406">Ion transport</keyword>
<keyword id="KW-1071">Ligand-gated ion channel</keyword>
<keyword id="KW-0472">Membrane</keyword>
<keyword id="KW-0628">Postsynaptic cell membrane</keyword>
<keyword id="KW-0675">Receptor</keyword>
<keyword id="KW-1185">Reference proteome</keyword>
<keyword id="KW-0732">Signal</keyword>
<keyword id="KW-0770">Synapse</keyword>
<keyword id="KW-0812">Transmembrane</keyword>
<keyword id="KW-1133">Transmembrane helix</keyword>
<keyword id="KW-0813">Transport</keyword>
<comment type="function">
    <text evidence="2 3 7">Beta subunit of the heteropentameric ligand-gated chloride channel gated by gamma-aminobutyric acid (GABA), a major inhibitory neurotransmitter in the brain (PubMed:3037384). GABA-gated chloride channels, also named GABA(A) receptors (GABAAR), consist of five subunits arranged around a central pore and contain GABA active binding site(s) located at the alpha and beta subunit interface(s) (By similarity). When activated by GABA, GABAARs selectively allow the flow of chloride anions across the cell membrane down their electrochemical gradient (PubMed:3037384). Chloride influx into the postsynaptic neuron following GABAAR opening decreases the neuron ability to generate a new action potential, thereby reducing nerve transmission (PubMed:3037384). Beta-containing GABAARs can simultaneously bind GABA and histamine where histamine binds at the interface of two neighboring beta subunits, which may be involved in the regulation of sleep and wakefulness (By similarity).</text>
</comment>
<comment type="catalytic activity">
    <reaction evidence="7">
        <text>chloride(in) = chloride(out)</text>
        <dbReference type="Rhea" id="RHEA:29823"/>
        <dbReference type="ChEBI" id="CHEBI:17996"/>
    </reaction>
</comment>
<comment type="activity regulation">
    <text evidence="5">Potentiated by histamine.</text>
</comment>
<comment type="subunit">
    <text evidence="2 4">Heteropentamer, formed by a combination of alpha (GABRA1-6), beta (GABRB1-3), gamma (GABRG1-3), delta (GABRD), epsilon (GABRE), rho (GABRR1-3), pi (GABRP) and theta (GABRQ) chains, each subunit exhibiting distinct physiological and pharmacological properties (By similarity). Binds UBQLN1 (By similarity).</text>
</comment>
<comment type="subcellular location">
    <subcellularLocation>
        <location evidence="7">Postsynaptic cell membrane</location>
        <topology evidence="7">Multi-pass membrane protein</topology>
    </subcellularLocation>
    <subcellularLocation>
        <location evidence="7">Cell membrane</location>
        <topology evidence="7">Multi-pass membrane protein</topology>
    </subcellularLocation>
</comment>
<comment type="domain">
    <text evidence="2">GABAARs subunits share a common topological structure: a peptide sequence made up of a long extracellular N-terminal, four transmembrane domains, intracellular or cytoplasmic domain located between the third and the fourth transmembrane domains.</text>
</comment>
<comment type="similarity">
    <text evidence="8">Belongs to the ligand-gated ion channel (TC 1.A.9) family. Gamma-aminobutyric acid receptor (TC 1.A.9.5) subfamily. GABRB1 sub-subfamily.</text>
</comment>
<gene>
    <name type="primary">GABRB1</name>
</gene>